<protein>
    <recommendedName>
        <fullName evidence="1">Small ribosomal subunit protein uS8</fullName>
    </recommendedName>
    <alternativeName>
        <fullName evidence="2">30S ribosomal protein S8</fullName>
    </alternativeName>
</protein>
<sequence length="131" mass="14867">MPVTDSIADYITRIRNAGRAKNKTTDIPYSKLRENISQLLQDKGYIKNFTVITTEKFPFIRIELKYTASGEPSIKEITRVSRPGRRTYEGKDIKKYLGGLGLYILSSSKGVITDKEAREQGVGGEILFRIY</sequence>
<reference key="1">
    <citation type="submission" date="2005-08" db="EMBL/GenBank/DDBJ databases">
        <title>Complete sequence of Pelodictyon luteolum DSM 273.</title>
        <authorList>
            <consortium name="US DOE Joint Genome Institute"/>
            <person name="Copeland A."/>
            <person name="Lucas S."/>
            <person name="Lapidus A."/>
            <person name="Barry K."/>
            <person name="Detter J.C."/>
            <person name="Glavina T."/>
            <person name="Hammon N."/>
            <person name="Israni S."/>
            <person name="Pitluck S."/>
            <person name="Bryant D."/>
            <person name="Schmutz J."/>
            <person name="Larimer F."/>
            <person name="Land M."/>
            <person name="Kyrpides N."/>
            <person name="Ivanova N."/>
            <person name="Richardson P."/>
        </authorList>
    </citation>
    <scope>NUCLEOTIDE SEQUENCE [LARGE SCALE GENOMIC DNA]</scope>
    <source>
        <strain>DSM 273 / BCRC 81028 / 2530</strain>
    </source>
</reference>
<dbReference type="EMBL" id="CP000096">
    <property type="protein sequence ID" value="ABB23083.1"/>
    <property type="molecule type" value="Genomic_DNA"/>
</dbReference>
<dbReference type="RefSeq" id="WP_011356959.1">
    <property type="nucleotide sequence ID" value="NC_007512.1"/>
</dbReference>
<dbReference type="SMR" id="Q3B6E8"/>
<dbReference type="STRING" id="319225.Plut_0195"/>
<dbReference type="KEGG" id="plt:Plut_0195"/>
<dbReference type="eggNOG" id="COG0096">
    <property type="taxonomic scope" value="Bacteria"/>
</dbReference>
<dbReference type="HOGENOM" id="CLU_098428_0_2_10"/>
<dbReference type="OrthoDB" id="9802617at2"/>
<dbReference type="Proteomes" id="UP000002709">
    <property type="component" value="Chromosome"/>
</dbReference>
<dbReference type="GO" id="GO:1990904">
    <property type="term" value="C:ribonucleoprotein complex"/>
    <property type="evidence" value="ECO:0007669"/>
    <property type="project" value="UniProtKB-KW"/>
</dbReference>
<dbReference type="GO" id="GO:0005840">
    <property type="term" value="C:ribosome"/>
    <property type="evidence" value="ECO:0007669"/>
    <property type="project" value="UniProtKB-KW"/>
</dbReference>
<dbReference type="GO" id="GO:0019843">
    <property type="term" value="F:rRNA binding"/>
    <property type="evidence" value="ECO:0007669"/>
    <property type="project" value="UniProtKB-UniRule"/>
</dbReference>
<dbReference type="GO" id="GO:0003735">
    <property type="term" value="F:structural constituent of ribosome"/>
    <property type="evidence" value="ECO:0007669"/>
    <property type="project" value="InterPro"/>
</dbReference>
<dbReference type="GO" id="GO:0006412">
    <property type="term" value="P:translation"/>
    <property type="evidence" value="ECO:0007669"/>
    <property type="project" value="UniProtKB-UniRule"/>
</dbReference>
<dbReference type="FunFam" id="3.30.1370.30:FF:000002">
    <property type="entry name" value="30S ribosomal protein S8"/>
    <property type="match status" value="1"/>
</dbReference>
<dbReference type="FunFam" id="3.30.1490.10:FF:000001">
    <property type="entry name" value="30S ribosomal protein S8"/>
    <property type="match status" value="1"/>
</dbReference>
<dbReference type="Gene3D" id="3.30.1370.30">
    <property type="match status" value="1"/>
</dbReference>
<dbReference type="Gene3D" id="3.30.1490.10">
    <property type="match status" value="1"/>
</dbReference>
<dbReference type="HAMAP" id="MF_01302_B">
    <property type="entry name" value="Ribosomal_uS8_B"/>
    <property type="match status" value="1"/>
</dbReference>
<dbReference type="InterPro" id="IPR000630">
    <property type="entry name" value="Ribosomal_uS8"/>
</dbReference>
<dbReference type="InterPro" id="IPR047863">
    <property type="entry name" value="Ribosomal_uS8_CS"/>
</dbReference>
<dbReference type="InterPro" id="IPR035987">
    <property type="entry name" value="Ribosomal_uS8_sf"/>
</dbReference>
<dbReference type="NCBIfam" id="NF001109">
    <property type="entry name" value="PRK00136.1"/>
    <property type="match status" value="1"/>
</dbReference>
<dbReference type="PANTHER" id="PTHR11758">
    <property type="entry name" value="40S RIBOSOMAL PROTEIN S15A"/>
    <property type="match status" value="1"/>
</dbReference>
<dbReference type="Pfam" id="PF00410">
    <property type="entry name" value="Ribosomal_S8"/>
    <property type="match status" value="1"/>
</dbReference>
<dbReference type="SUPFAM" id="SSF56047">
    <property type="entry name" value="Ribosomal protein S8"/>
    <property type="match status" value="1"/>
</dbReference>
<dbReference type="PROSITE" id="PS00053">
    <property type="entry name" value="RIBOSOMAL_S8"/>
    <property type="match status" value="1"/>
</dbReference>
<organism>
    <name type="scientific">Chlorobium luteolum (strain DSM 273 / BCRC 81028 / 2530)</name>
    <name type="common">Pelodictyon luteolum</name>
    <dbReference type="NCBI Taxonomy" id="319225"/>
    <lineage>
        <taxon>Bacteria</taxon>
        <taxon>Pseudomonadati</taxon>
        <taxon>Chlorobiota</taxon>
        <taxon>Chlorobiia</taxon>
        <taxon>Chlorobiales</taxon>
        <taxon>Chlorobiaceae</taxon>
        <taxon>Chlorobium/Pelodictyon group</taxon>
        <taxon>Pelodictyon</taxon>
    </lineage>
</organism>
<keyword id="KW-1185">Reference proteome</keyword>
<keyword id="KW-0687">Ribonucleoprotein</keyword>
<keyword id="KW-0689">Ribosomal protein</keyword>
<keyword id="KW-0694">RNA-binding</keyword>
<keyword id="KW-0699">rRNA-binding</keyword>
<name>RS8_CHLL3</name>
<evidence type="ECO:0000255" key="1">
    <source>
        <dbReference type="HAMAP-Rule" id="MF_01302"/>
    </source>
</evidence>
<evidence type="ECO:0000305" key="2"/>
<accession>Q3B6E8</accession>
<proteinExistence type="inferred from homology"/>
<gene>
    <name evidence="1" type="primary">rpsH</name>
    <name type="ordered locus">Plut_0195</name>
</gene>
<feature type="chain" id="PRO_0000228864" description="Small ribosomal subunit protein uS8">
    <location>
        <begin position="1"/>
        <end position="131"/>
    </location>
</feature>
<comment type="function">
    <text evidence="1">One of the primary rRNA binding proteins, it binds directly to 16S rRNA central domain where it helps coordinate assembly of the platform of the 30S subunit.</text>
</comment>
<comment type="subunit">
    <text evidence="1">Part of the 30S ribosomal subunit. Contacts proteins S5 and S12.</text>
</comment>
<comment type="similarity">
    <text evidence="1">Belongs to the universal ribosomal protein uS8 family.</text>
</comment>